<evidence type="ECO:0000255" key="1">
    <source>
        <dbReference type="HAMAP-Rule" id="MF_00040"/>
    </source>
</evidence>
<accession>Q1R030</accession>
<feature type="chain" id="PRO_1000003139" description="Ribosome-recycling factor">
    <location>
        <begin position="1"/>
        <end position="185"/>
    </location>
</feature>
<keyword id="KW-0963">Cytoplasm</keyword>
<keyword id="KW-0648">Protein biosynthesis</keyword>
<keyword id="KW-1185">Reference proteome</keyword>
<dbReference type="EMBL" id="CP000285">
    <property type="protein sequence ID" value="ABE57928.1"/>
    <property type="molecule type" value="Genomic_DNA"/>
</dbReference>
<dbReference type="RefSeq" id="WP_011505874.1">
    <property type="nucleotide sequence ID" value="NC_007963.1"/>
</dbReference>
<dbReference type="SMR" id="Q1R030"/>
<dbReference type="STRING" id="290398.Csal_0566"/>
<dbReference type="GeneID" id="95333322"/>
<dbReference type="KEGG" id="csa:Csal_0566"/>
<dbReference type="eggNOG" id="COG0233">
    <property type="taxonomic scope" value="Bacteria"/>
</dbReference>
<dbReference type="HOGENOM" id="CLU_073981_2_1_6"/>
<dbReference type="OrthoDB" id="9804006at2"/>
<dbReference type="Proteomes" id="UP000000239">
    <property type="component" value="Chromosome"/>
</dbReference>
<dbReference type="GO" id="GO:0005829">
    <property type="term" value="C:cytosol"/>
    <property type="evidence" value="ECO:0007669"/>
    <property type="project" value="GOC"/>
</dbReference>
<dbReference type="GO" id="GO:0043023">
    <property type="term" value="F:ribosomal large subunit binding"/>
    <property type="evidence" value="ECO:0007669"/>
    <property type="project" value="TreeGrafter"/>
</dbReference>
<dbReference type="GO" id="GO:0002184">
    <property type="term" value="P:cytoplasmic translational termination"/>
    <property type="evidence" value="ECO:0007669"/>
    <property type="project" value="TreeGrafter"/>
</dbReference>
<dbReference type="CDD" id="cd00520">
    <property type="entry name" value="RRF"/>
    <property type="match status" value="1"/>
</dbReference>
<dbReference type="FunFam" id="1.10.132.20:FF:000001">
    <property type="entry name" value="Ribosome-recycling factor"/>
    <property type="match status" value="1"/>
</dbReference>
<dbReference type="FunFam" id="3.30.1360.40:FF:000001">
    <property type="entry name" value="Ribosome-recycling factor"/>
    <property type="match status" value="1"/>
</dbReference>
<dbReference type="Gene3D" id="3.30.1360.40">
    <property type="match status" value="1"/>
</dbReference>
<dbReference type="Gene3D" id="1.10.132.20">
    <property type="entry name" value="Ribosome-recycling factor"/>
    <property type="match status" value="1"/>
</dbReference>
<dbReference type="HAMAP" id="MF_00040">
    <property type="entry name" value="RRF"/>
    <property type="match status" value="1"/>
</dbReference>
<dbReference type="InterPro" id="IPR002661">
    <property type="entry name" value="Ribosome_recyc_fac"/>
</dbReference>
<dbReference type="InterPro" id="IPR023584">
    <property type="entry name" value="Ribosome_recyc_fac_dom"/>
</dbReference>
<dbReference type="InterPro" id="IPR036191">
    <property type="entry name" value="RRF_sf"/>
</dbReference>
<dbReference type="NCBIfam" id="TIGR00496">
    <property type="entry name" value="frr"/>
    <property type="match status" value="1"/>
</dbReference>
<dbReference type="PANTHER" id="PTHR20982:SF3">
    <property type="entry name" value="MITOCHONDRIAL RIBOSOME RECYCLING FACTOR PSEUDO 1"/>
    <property type="match status" value="1"/>
</dbReference>
<dbReference type="PANTHER" id="PTHR20982">
    <property type="entry name" value="RIBOSOME RECYCLING FACTOR"/>
    <property type="match status" value="1"/>
</dbReference>
<dbReference type="Pfam" id="PF01765">
    <property type="entry name" value="RRF"/>
    <property type="match status" value="1"/>
</dbReference>
<dbReference type="SUPFAM" id="SSF55194">
    <property type="entry name" value="Ribosome recycling factor, RRF"/>
    <property type="match status" value="1"/>
</dbReference>
<gene>
    <name evidence="1" type="primary">frr</name>
    <name type="ordered locus">Csal_0566</name>
</gene>
<proteinExistence type="inferred from homology"/>
<protein>
    <recommendedName>
        <fullName evidence="1">Ribosome-recycling factor</fullName>
        <shortName evidence="1">RRF</shortName>
    </recommendedName>
    <alternativeName>
        <fullName evidence="1">Ribosome-releasing factor</fullName>
    </alternativeName>
</protein>
<reference key="1">
    <citation type="journal article" date="2011" name="Stand. Genomic Sci.">
        <title>Complete genome sequence of the halophilic and highly halotolerant Chromohalobacter salexigens type strain (1H11(T)).</title>
        <authorList>
            <person name="Copeland A."/>
            <person name="O'Connor K."/>
            <person name="Lucas S."/>
            <person name="Lapidus A."/>
            <person name="Berry K.W."/>
            <person name="Detter J.C."/>
            <person name="Del Rio T.G."/>
            <person name="Hammon N."/>
            <person name="Dalin E."/>
            <person name="Tice H."/>
            <person name="Pitluck S."/>
            <person name="Bruce D."/>
            <person name="Goodwin L."/>
            <person name="Han C."/>
            <person name="Tapia R."/>
            <person name="Saunders E."/>
            <person name="Schmutz J."/>
            <person name="Brettin T."/>
            <person name="Larimer F."/>
            <person name="Land M."/>
            <person name="Hauser L."/>
            <person name="Vargas C."/>
            <person name="Nieto J.J."/>
            <person name="Kyrpides N.C."/>
            <person name="Ivanova N."/>
            <person name="Goker M."/>
            <person name="Klenk H.P."/>
            <person name="Csonka L.N."/>
            <person name="Woyke T."/>
        </authorList>
    </citation>
    <scope>NUCLEOTIDE SEQUENCE [LARGE SCALE GENOMIC DNA]</scope>
    <source>
        <strain>ATCC BAA-138 / DSM 3043 / CIP 106854 / NCIMB 13768 / 1H11</strain>
    </source>
</reference>
<comment type="function">
    <text evidence="1">Responsible for the release of ribosomes from messenger RNA at the termination of protein biosynthesis. May increase the efficiency of translation by recycling ribosomes from one round of translation to another.</text>
</comment>
<comment type="subcellular location">
    <subcellularLocation>
        <location evidence="1">Cytoplasm</location>
    </subcellularLocation>
</comment>
<comment type="similarity">
    <text evidence="1">Belongs to the RRF family.</text>
</comment>
<name>RRF_CHRSD</name>
<organism>
    <name type="scientific">Chromohalobacter salexigens (strain ATCC BAA-138 / DSM 3043 / CIP 106854 / NCIMB 13768 / 1H11)</name>
    <dbReference type="NCBI Taxonomy" id="290398"/>
    <lineage>
        <taxon>Bacteria</taxon>
        <taxon>Pseudomonadati</taxon>
        <taxon>Pseudomonadota</taxon>
        <taxon>Gammaproteobacteria</taxon>
        <taxon>Oceanospirillales</taxon>
        <taxon>Halomonadaceae</taxon>
        <taxon>Chromohalobacter</taxon>
    </lineage>
</organism>
<sequence>MINDIKKDADARMKKSVEALNANFHKIRTGRAHPSLLDAVTVEYYGSEMPLNQVASVNVEDARTLAVVPWEKSMVPKVEKAIMTSDLGLNPAAAGNVIRVPLPPLTEETRRNYIKQARGEAENARVAVRNVRRDANGDLKSLLKEKEITEDEERHAIDEIQKLTDKYVTEIDKLLETKEHDLLQV</sequence>